<comment type="function">
    <text evidence="1">PPIases accelerate the folding of proteins. It catalyzes the cis-trans isomerization of proline imidic peptide bonds in oligopeptides (By similarity).</text>
</comment>
<comment type="catalytic activity">
    <reaction>
        <text>[protein]-peptidylproline (omega=180) = [protein]-peptidylproline (omega=0)</text>
        <dbReference type="Rhea" id="RHEA:16237"/>
        <dbReference type="Rhea" id="RHEA-COMP:10747"/>
        <dbReference type="Rhea" id="RHEA-COMP:10748"/>
        <dbReference type="ChEBI" id="CHEBI:83833"/>
        <dbReference type="ChEBI" id="CHEBI:83834"/>
        <dbReference type="EC" id="5.2.1.8"/>
    </reaction>
</comment>
<comment type="similarity">
    <text evidence="3">Belongs to the cyclophilin-type PPIase family.</text>
</comment>
<feature type="chain" id="PRO_0000299079" description="Putative peptidyl-prolyl cis-trans isomerase">
    <location>
        <begin position="1"/>
        <end position="197"/>
    </location>
</feature>
<feature type="domain" description="PPIase cyclophilin-type" evidence="2">
    <location>
        <begin position="14"/>
        <end position="195"/>
    </location>
</feature>
<protein>
    <recommendedName>
        <fullName>Putative peptidyl-prolyl cis-trans isomerase</fullName>
        <shortName>PPIase</shortName>
        <ecNumber>5.2.1.8</ecNumber>
    </recommendedName>
    <alternativeName>
        <fullName>Rotamase</fullName>
    </alternativeName>
</protein>
<accession>Q2FIC1</accession>
<dbReference type="EC" id="5.2.1.8"/>
<dbReference type="EMBL" id="CP000255">
    <property type="protein sequence ID" value="ABD20840.1"/>
    <property type="molecule type" value="Genomic_DNA"/>
</dbReference>
<dbReference type="RefSeq" id="WP_000035058.1">
    <property type="nucleotide sequence ID" value="NZ_CP027476.1"/>
</dbReference>
<dbReference type="SMR" id="Q2FIC1"/>
<dbReference type="KEGG" id="saa:SAUSA300_0857"/>
<dbReference type="HOGENOM" id="CLU_012062_16_0_9"/>
<dbReference type="OMA" id="SVWGQVI"/>
<dbReference type="BRENDA" id="5.2.1.8">
    <property type="organism ID" value="3352"/>
</dbReference>
<dbReference type="Proteomes" id="UP000001939">
    <property type="component" value="Chromosome"/>
</dbReference>
<dbReference type="GO" id="GO:0003755">
    <property type="term" value="F:peptidyl-prolyl cis-trans isomerase activity"/>
    <property type="evidence" value="ECO:0007669"/>
    <property type="project" value="UniProtKB-KW"/>
</dbReference>
<dbReference type="Gene3D" id="2.40.100.10">
    <property type="entry name" value="Cyclophilin-like"/>
    <property type="match status" value="1"/>
</dbReference>
<dbReference type="InterPro" id="IPR029000">
    <property type="entry name" value="Cyclophilin-like_dom_sf"/>
</dbReference>
<dbReference type="InterPro" id="IPR024936">
    <property type="entry name" value="Cyclophilin-type_PPIase"/>
</dbReference>
<dbReference type="InterPro" id="IPR002130">
    <property type="entry name" value="Cyclophilin-type_PPIase_dom"/>
</dbReference>
<dbReference type="InterPro" id="IPR044666">
    <property type="entry name" value="Cyclophilin_A-like"/>
</dbReference>
<dbReference type="PANTHER" id="PTHR45625">
    <property type="entry name" value="PEPTIDYL-PROLYL CIS-TRANS ISOMERASE-RELATED"/>
    <property type="match status" value="1"/>
</dbReference>
<dbReference type="PANTHER" id="PTHR45625:SF4">
    <property type="entry name" value="PEPTIDYLPROLYL ISOMERASE DOMAIN AND WD REPEAT-CONTAINING PROTEIN 1"/>
    <property type="match status" value="1"/>
</dbReference>
<dbReference type="Pfam" id="PF00160">
    <property type="entry name" value="Pro_isomerase"/>
    <property type="match status" value="1"/>
</dbReference>
<dbReference type="PIRSF" id="PIRSF001467">
    <property type="entry name" value="Peptidylpro_ismrse"/>
    <property type="match status" value="1"/>
</dbReference>
<dbReference type="PRINTS" id="PR00153">
    <property type="entry name" value="CSAPPISMRASE"/>
</dbReference>
<dbReference type="SUPFAM" id="SSF50891">
    <property type="entry name" value="Cyclophilin-like"/>
    <property type="match status" value="1"/>
</dbReference>
<dbReference type="PROSITE" id="PS50072">
    <property type="entry name" value="CSA_PPIASE_2"/>
    <property type="match status" value="1"/>
</dbReference>
<gene>
    <name type="ordered locus">SAUSA300_0857</name>
</gene>
<keyword id="KW-0413">Isomerase</keyword>
<keyword id="KW-0697">Rotamase</keyword>
<name>PPI1_STAA3</name>
<proteinExistence type="inferred from homology"/>
<sequence>MANYPQLNKEVQQGEIKVVMHTNKGDMTFKLFPNIAPKTVENFVTHAKNGYYDGITFHRVINDFMIQGGDPTATGMGGESIYGGAFEDEFSLNAFNLYGALSMANSGPNTNGSQFFIVQMKEVPQNMLSQLADGGWPQPIVDAYGEKGGTPWLDQKHTVFGQIIDGETTLEDIANTKVGPQDKPLHDVVIESIDVEE</sequence>
<reference key="1">
    <citation type="journal article" date="2006" name="Lancet">
        <title>Complete genome sequence of USA300, an epidemic clone of community-acquired meticillin-resistant Staphylococcus aureus.</title>
        <authorList>
            <person name="Diep B.A."/>
            <person name="Gill S.R."/>
            <person name="Chang R.F."/>
            <person name="Phan T.H."/>
            <person name="Chen J.H."/>
            <person name="Davidson M.G."/>
            <person name="Lin F."/>
            <person name="Lin J."/>
            <person name="Carleton H.A."/>
            <person name="Mongodin E.F."/>
            <person name="Sensabaugh G.F."/>
            <person name="Perdreau-Remington F."/>
        </authorList>
    </citation>
    <scope>NUCLEOTIDE SEQUENCE [LARGE SCALE GENOMIC DNA]</scope>
    <source>
        <strain>USA300</strain>
    </source>
</reference>
<evidence type="ECO:0000250" key="1"/>
<evidence type="ECO:0000255" key="2">
    <source>
        <dbReference type="PROSITE-ProRule" id="PRU00156"/>
    </source>
</evidence>
<evidence type="ECO:0000305" key="3"/>
<organism>
    <name type="scientific">Staphylococcus aureus (strain USA300)</name>
    <dbReference type="NCBI Taxonomy" id="367830"/>
    <lineage>
        <taxon>Bacteria</taxon>
        <taxon>Bacillati</taxon>
        <taxon>Bacillota</taxon>
        <taxon>Bacilli</taxon>
        <taxon>Bacillales</taxon>
        <taxon>Staphylococcaceae</taxon>
        <taxon>Staphylococcus</taxon>
    </lineage>
</organism>